<evidence type="ECO:0000255" key="1">
    <source>
        <dbReference type="HAMAP-Rule" id="MF_01351"/>
    </source>
</evidence>
<protein>
    <recommendedName>
        <fullName evidence="1">NADH-quinone oxidoreductase subunit I</fullName>
        <ecNumber evidence="1">7.1.1.-</ecNumber>
    </recommendedName>
    <alternativeName>
        <fullName evidence="1">NADH dehydrogenase I subunit I</fullName>
    </alternativeName>
    <alternativeName>
        <fullName evidence="1">NDH-1 subunit I</fullName>
    </alternativeName>
</protein>
<proteinExistence type="inferred from homology"/>
<reference key="1">
    <citation type="journal article" date="2000" name="Nature">
        <title>Genome sequence of the endocellular bacterial symbiont of aphids Buchnera sp. APS.</title>
        <authorList>
            <person name="Shigenobu S."/>
            <person name="Watanabe H."/>
            <person name="Hattori M."/>
            <person name="Sakaki Y."/>
            <person name="Ishikawa H."/>
        </authorList>
    </citation>
    <scope>NUCLEOTIDE SEQUENCE [LARGE SCALE GENOMIC DNA]</scope>
    <source>
        <strain>APS</strain>
    </source>
</reference>
<sequence>MTLKNIIIGFFTQIRSIFMIGANIFSKPETKLYPEEKVYLAPRYRGRIILTRNIDGQERCVACNLCAVVCPVDCISLQKSEKTDGRWYPKFFRINFSRCIFCGLCEEACPTAAIQLMPDFELSDFKRQDLVYEKKDLLISGPGKYPNYDFYNFSGVTLKGKKTGDLEIQARPIDVKDLLP</sequence>
<comment type="function">
    <text evidence="1">NDH-1 shuttles electrons from NADH, via FMN and iron-sulfur (Fe-S) centers, to quinones in the respiratory chain. The immediate electron acceptor for the enzyme in this species is believed to be ubiquinone. Couples the redox reaction to proton translocation (for every two electrons transferred, four hydrogen ions are translocated across the cytoplasmic membrane), and thus conserves the redox energy in a proton gradient.</text>
</comment>
<comment type="catalytic activity">
    <reaction evidence="1">
        <text>a quinone + NADH + 5 H(+)(in) = a quinol + NAD(+) + 4 H(+)(out)</text>
        <dbReference type="Rhea" id="RHEA:57888"/>
        <dbReference type="ChEBI" id="CHEBI:15378"/>
        <dbReference type="ChEBI" id="CHEBI:24646"/>
        <dbReference type="ChEBI" id="CHEBI:57540"/>
        <dbReference type="ChEBI" id="CHEBI:57945"/>
        <dbReference type="ChEBI" id="CHEBI:132124"/>
    </reaction>
</comment>
<comment type="cofactor">
    <cofactor evidence="1">
        <name>[4Fe-4S] cluster</name>
        <dbReference type="ChEBI" id="CHEBI:49883"/>
    </cofactor>
    <text evidence="1">Binds 2 [4Fe-4S] clusters per subunit.</text>
</comment>
<comment type="subunit">
    <text evidence="1">NDH-1 is composed of 13 different subunits. Subunits NuoA, H, J, K, L, M, N constitute the membrane sector of the complex.</text>
</comment>
<comment type="subcellular location">
    <subcellularLocation>
        <location evidence="1">Cell membrane</location>
        <topology evidence="1">Peripheral membrane protein</topology>
    </subcellularLocation>
</comment>
<comment type="similarity">
    <text evidence="1">Belongs to the complex I 23 kDa subunit family.</text>
</comment>
<keyword id="KW-0004">4Fe-4S</keyword>
<keyword id="KW-1003">Cell membrane</keyword>
<keyword id="KW-0408">Iron</keyword>
<keyword id="KW-0411">Iron-sulfur</keyword>
<keyword id="KW-0472">Membrane</keyword>
<keyword id="KW-0479">Metal-binding</keyword>
<keyword id="KW-0520">NAD</keyword>
<keyword id="KW-0874">Quinone</keyword>
<keyword id="KW-1185">Reference proteome</keyword>
<keyword id="KW-0677">Repeat</keyword>
<keyword id="KW-1278">Translocase</keyword>
<keyword id="KW-0830">Ubiquinone</keyword>
<organism>
    <name type="scientific">Buchnera aphidicola subsp. Acyrthosiphon pisum (strain APS)</name>
    <name type="common">Acyrthosiphon pisum symbiotic bacterium</name>
    <dbReference type="NCBI Taxonomy" id="107806"/>
    <lineage>
        <taxon>Bacteria</taxon>
        <taxon>Pseudomonadati</taxon>
        <taxon>Pseudomonadota</taxon>
        <taxon>Gammaproteobacteria</taxon>
        <taxon>Enterobacterales</taxon>
        <taxon>Erwiniaceae</taxon>
        <taxon>Buchnera</taxon>
    </lineage>
</organism>
<feature type="chain" id="PRO_0000118726" description="NADH-quinone oxidoreductase subunit I">
    <location>
        <begin position="1"/>
        <end position="180"/>
    </location>
</feature>
<feature type="domain" description="4Fe-4S ferredoxin-type 1" evidence="1">
    <location>
        <begin position="50"/>
        <end position="80"/>
    </location>
</feature>
<feature type="domain" description="4Fe-4S ferredoxin-type 2" evidence="1">
    <location>
        <begin position="90"/>
        <end position="119"/>
    </location>
</feature>
<feature type="binding site" evidence="1">
    <location>
        <position position="60"/>
    </location>
    <ligand>
        <name>[4Fe-4S] cluster</name>
        <dbReference type="ChEBI" id="CHEBI:49883"/>
        <label>1</label>
    </ligand>
</feature>
<feature type="binding site" evidence="1">
    <location>
        <position position="63"/>
    </location>
    <ligand>
        <name>[4Fe-4S] cluster</name>
        <dbReference type="ChEBI" id="CHEBI:49883"/>
        <label>1</label>
    </ligand>
</feature>
<feature type="binding site" evidence="1">
    <location>
        <position position="66"/>
    </location>
    <ligand>
        <name>[4Fe-4S] cluster</name>
        <dbReference type="ChEBI" id="CHEBI:49883"/>
        <label>1</label>
    </ligand>
</feature>
<feature type="binding site" evidence="1">
    <location>
        <position position="70"/>
    </location>
    <ligand>
        <name>[4Fe-4S] cluster</name>
        <dbReference type="ChEBI" id="CHEBI:49883"/>
        <label>2</label>
    </ligand>
</feature>
<feature type="binding site" evidence="1">
    <location>
        <position position="99"/>
    </location>
    <ligand>
        <name>[4Fe-4S] cluster</name>
        <dbReference type="ChEBI" id="CHEBI:49883"/>
        <label>2</label>
    </ligand>
</feature>
<feature type="binding site" evidence="1">
    <location>
        <position position="102"/>
    </location>
    <ligand>
        <name>[4Fe-4S] cluster</name>
        <dbReference type="ChEBI" id="CHEBI:49883"/>
        <label>2</label>
    </ligand>
</feature>
<feature type="binding site" evidence="1">
    <location>
        <position position="105"/>
    </location>
    <ligand>
        <name>[4Fe-4S] cluster</name>
        <dbReference type="ChEBI" id="CHEBI:49883"/>
        <label>2</label>
    </ligand>
</feature>
<feature type="binding site" evidence="1">
    <location>
        <position position="109"/>
    </location>
    <ligand>
        <name>[4Fe-4S] cluster</name>
        <dbReference type="ChEBI" id="CHEBI:49883"/>
        <label>1</label>
    </ligand>
</feature>
<name>NUOI_BUCAI</name>
<accession>P57259</accession>
<dbReference type="EC" id="7.1.1.-" evidence="1"/>
<dbReference type="EMBL" id="BA000003">
    <property type="protein sequence ID" value="BAB12879.1"/>
    <property type="molecule type" value="Genomic_DNA"/>
</dbReference>
<dbReference type="RefSeq" id="NP_239993.1">
    <property type="nucleotide sequence ID" value="NC_002528.1"/>
</dbReference>
<dbReference type="RefSeq" id="WP_010895979.1">
    <property type="nucleotide sequence ID" value="NC_002528.1"/>
</dbReference>
<dbReference type="SMR" id="P57259"/>
<dbReference type="STRING" id="563178.BUAP5A_159"/>
<dbReference type="EnsemblBacteria" id="BAB12879">
    <property type="protein sequence ID" value="BAB12879"/>
    <property type="gene ID" value="BAB12879"/>
</dbReference>
<dbReference type="KEGG" id="buc:BU161"/>
<dbReference type="PATRIC" id="fig|107806.10.peg.171"/>
<dbReference type="eggNOG" id="COG1143">
    <property type="taxonomic scope" value="Bacteria"/>
</dbReference>
<dbReference type="HOGENOM" id="CLU_067218_4_3_6"/>
<dbReference type="Proteomes" id="UP000001806">
    <property type="component" value="Chromosome"/>
</dbReference>
<dbReference type="GO" id="GO:0005886">
    <property type="term" value="C:plasma membrane"/>
    <property type="evidence" value="ECO:0007669"/>
    <property type="project" value="UniProtKB-SubCell"/>
</dbReference>
<dbReference type="GO" id="GO:0051539">
    <property type="term" value="F:4 iron, 4 sulfur cluster binding"/>
    <property type="evidence" value="ECO:0007669"/>
    <property type="project" value="UniProtKB-KW"/>
</dbReference>
<dbReference type="GO" id="GO:0005506">
    <property type="term" value="F:iron ion binding"/>
    <property type="evidence" value="ECO:0007669"/>
    <property type="project" value="UniProtKB-UniRule"/>
</dbReference>
<dbReference type="GO" id="GO:0050136">
    <property type="term" value="F:NADH:ubiquinone reductase (non-electrogenic) activity"/>
    <property type="evidence" value="ECO:0007669"/>
    <property type="project" value="UniProtKB-UniRule"/>
</dbReference>
<dbReference type="GO" id="GO:0048038">
    <property type="term" value="F:quinone binding"/>
    <property type="evidence" value="ECO:0007669"/>
    <property type="project" value="UniProtKB-KW"/>
</dbReference>
<dbReference type="GO" id="GO:0009060">
    <property type="term" value="P:aerobic respiration"/>
    <property type="evidence" value="ECO:0007669"/>
    <property type="project" value="TreeGrafter"/>
</dbReference>
<dbReference type="FunFam" id="3.30.70.3270:FF:000002">
    <property type="entry name" value="NADH-quinone oxidoreductase subunit I"/>
    <property type="match status" value="1"/>
</dbReference>
<dbReference type="Gene3D" id="3.30.70.3270">
    <property type="match status" value="1"/>
</dbReference>
<dbReference type="HAMAP" id="MF_01351">
    <property type="entry name" value="NDH1_NuoI"/>
    <property type="match status" value="1"/>
</dbReference>
<dbReference type="InterPro" id="IPR017896">
    <property type="entry name" value="4Fe4S_Fe-S-bd"/>
</dbReference>
<dbReference type="InterPro" id="IPR017900">
    <property type="entry name" value="4Fe4S_Fe_S_CS"/>
</dbReference>
<dbReference type="InterPro" id="IPR010226">
    <property type="entry name" value="NADH_quinone_OxRdtase_chainI"/>
</dbReference>
<dbReference type="NCBIfam" id="TIGR01971">
    <property type="entry name" value="NuoI"/>
    <property type="match status" value="1"/>
</dbReference>
<dbReference type="NCBIfam" id="NF004536">
    <property type="entry name" value="PRK05888.1-1"/>
    <property type="match status" value="1"/>
</dbReference>
<dbReference type="PANTHER" id="PTHR10849:SF20">
    <property type="entry name" value="NADH DEHYDROGENASE [UBIQUINONE] IRON-SULFUR PROTEIN 8, MITOCHONDRIAL"/>
    <property type="match status" value="1"/>
</dbReference>
<dbReference type="PANTHER" id="PTHR10849">
    <property type="entry name" value="NADH DEHYDROGENASE UBIQUINONE IRON-SULFUR PROTEIN 8, MITOCHONDRIAL"/>
    <property type="match status" value="1"/>
</dbReference>
<dbReference type="Pfam" id="PF12838">
    <property type="entry name" value="Fer4_7"/>
    <property type="match status" value="1"/>
</dbReference>
<dbReference type="SUPFAM" id="SSF54862">
    <property type="entry name" value="4Fe-4S ferredoxins"/>
    <property type="match status" value="1"/>
</dbReference>
<dbReference type="PROSITE" id="PS00198">
    <property type="entry name" value="4FE4S_FER_1"/>
    <property type="match status" value="2"/>
</dbReference>
<dbReference type="PROSITE" id="PS51379">
    <property type="entry name" value="4FE4S_FER_2"/>
    <property type="match status" value="2"/>
</dbReference>
<gene>
    <name evidence="1" type="primary">nuoI</name>
    <name type="ordered locus">BU161</name>
</gene>